<dbReference type="EC" id="2.1.2.1" evidence="1"/>
<dbReference type="EMBL" id="CP000463">
    <property type="protein sequence ID" value="ABJ06745.1"/>
    <property type="molecule type" value="Genomic_DNA"/>
</dbReference>
<dbReference type="SMR" id="Q07MT9"/>
<dbReference type="STRING" id="316055.RPE_2808"/>
<dbReference type="KEGG" id="rpe:RPE_2808"/>
<dbReference type="eggNOG" id="COG0112">
    <property type="taxonomic scope" value="Bacteria"/>
</dbReference>
<dbReference type="HOGENOM" id="CLU_022477_2_1_5"/>
<dbReference type="OrthoDB" id="9803846at2"/>
<dbReference type="UniPathway" id="UPA00193"/>
<dbReference type="UniPathway" id="UPA00288">
    <property type="reaction ID" value="UER01023"/>
</dbReference>
<dbReference type="GO" id="GO:0005829">
    <property type="term" value="C:cytosol"/>
    <property type="evidence" value="ECO:0007669"/>
    <property type="project" value="TreeGrafter"/>
</dbReference>
<dbReference type="GO" id="GO:0004372">
    <property type="term" value="F:glycine hydroxymethyltransferase activity"/>
    <property type="evidence" value="ECO:0007669"/>
    <property type="project" value="UniProtKB-UniRule"/>
</dbReference>
<dbReference type="GO" id="GO:0030170">
    <property type="term" value="F:pyridoxal phosphate binding"/>
    <property type="evidence" value="ECO:0007669"/>
    <property type="project" value="UniProtKB-UniRule"/>
</dbReference>
<dbReference type="GO" id="GO:0019264">
    <property type="term" value="P:glycine biosynthetic process from serine"/>
    <property type="evidence" value="ECO:0007669"/>
    <property type="project" value="UniProtKB-UniRule"/>
</dbReference>
<dbReference type="GO" id="GO:0035999">
    <property type="term" value="P:tetrahydrofolate interconversion"/>
    <property type="evidence" value="ECO:0007669"/>
    <property type="project" value="UniProtKB-UniRule"/>
</dbReference>
<dbReference type="CDD" id="cd00378">
    <property type="entry name" value="SHMT"/>
    <property type="match status" value="1"/>
</dbReference>
<dbReference type="FunFam" id="3.40.640.10:FF:000001">
    <property type="entry name" value="Serine hydroxymethyltransferase"/>
    <property type="match status" value="1"/>
</dbReference>
<dbReference type="FunFam" id="3.90.1150.10:FF:000003">
    <property type="entry name" value="Serine hydroxymethyltransferase"/>
    <property type="match status" value="1"/>
</dbReference>
<dbReference type="Gene3D" id="3.90.1150.10">
    <property type="entry name" value="Aspartate Aminotransferase, domain 1"/>
    <property type="match status" value="1"/>
</dbReference>
<dbReference type="Gene3D" id="3.40.640.10">
    <property type="entry name" value="Type I PLP-dependent aspartate aminotransferase-like (Major domain)"/>
    <property type="match status" value="1"/>
</dbReference>
<dbReference type="HAMAP" id="MF_00051">
    <property type="entry name" value="SHMT"/>
    <property type="match status" value="1"/>
</dbReference>
<dbReference type="InterPro" id="IPR015424">
    <property type="entry name" value="PyrdxlP-dep_Trfase"/>
</dbReference>
<dbReference type="InterPro" id="IPR015421">
    <property type="entry name" value="PyrdxlP-dep_Trfase_major"/>
</dbReference>
<dbReference type="InterPro" id="IPR015422">
    <property type="entry name" value="PyrdxlP-dep_Trfase_small"/>
</dbReference>
<dbReference type="InterPro" id="IPR001085">
    <property type="entry name" value="Ser_HO-MeTrfase"/>
</dbReference>
<dbReference type="InterPro" id="IPR049943">
    <property type="entry name" value="Ser_HO-MeTrfase-like"/>
</dbReference>
<dbReference type="InterPro" id="IPR019798">
    <property type="entry name" value="Ser_HO-MeTrfase_PLP_BS"/>
</dbReference>
<dbReference type="InterPro" id="IPR039429">
    <property type="entry name" value="SHMT-like_dom"/>
</dbReference>
<dbReference type="NCBIfam" id="NF000586">
    <property type="entry name" value="PRK00011.1"/>
    <property type="match status" value="1"/>
</dbReference>
<dbReference type="PANTHER" id="PTHR11680">
    <property type="entry name" value="SERINE HYDROXYMETHYLTRANSFERASE"/>
    <property type="match status" value="1"/>
</dbReference>
<dbReference type="PANTHER" id="PTHR11680:SF35">
    <property type="entry name" value="SERINE HYDROXYMETHYLTRANSFERASE 1"/>
    <property type="match status" value="1"/>
</dbReference>
<dbReference type="Pfam" id="PF00464">
    <property type="entry name" value="SHMT"/>
    <property type="match status" value="1"/>
</dbReference>
<dbReference type="PIRSF" id="PIRSF000412">
    <property type="entry name" value="SHMT"/>
    <property type="match status" value="1"/>
</dbReference>
<dbReference type="SUPFAM" id="SSF53383">
    <property type="entry name" value="PLP-dependent transferases"/>
    <property type="match status" value="1"/>
</dbReference>
<dbReference type="PROSITE" id="PS00096">
    <property type="entry name" value="SHMT"/>
    <property type="match status" value="1"/>
</dbReference>
<accession>Q07MT9</accession>
<feature type="chain" id="PRO_0000369949" description="Serine hydroxymethyltransferase">
    <location>
        <begin position="1"/>
        <end position="433"/>
    </location>
</feature>
<feature type="binding site" evidence="1">
    <location>
        <position position="132"/>
    </location>
    <ligand>
        <name>(6S)-5,6,7,8-tetrahydrofolate</name>
        <dbReference type="ChEBI" id="CHEBI:57453"/>
    </ligand>
</feature>
<feature type="binding site" evidence="1">
    <location>
        <begin position="136"/>
        <end position="138"/>
    </location>
    <ligand>
        <name>(6S)-5,6,7,8-tetrahydrofolate</name>
        <dbReference type="ChEBI" id="CHEBI:57453"/>
    </ligand>
</feature>
<feature type="site" description="Plays an important role in substrate specificity" evidence="1">
    <location>
        <position position="240"/>
    </location>
</feature>
<feature type="modified residue" description="N6-(pyridoxal phosphate)lysine" evidence="1">
    <location>
        <position position="241"/>
    </location>
</feature>
<sequence length="433" mass="46178">MSTSAKTQSAPDQFFSASLAEADPEIAAAIAGELGRQRHEIELIASENIVSRAVLEAQGSVMTNKYAEGYPGHRYYGGCEFVDVAENLAIDRAKKLFGAGFANVQPNSGSQMNQAVFLALLQPGDTFMGLDLAAGGHLTHGATVNMSGKWFKPVHYTVRREDGIIDMDEVAKIAEANKPKLIIAGGSAYSRAWDFKRFREIADSVGAYFMVDMAHFAGLVAGGVHASPVPHAHVCTTTTHKSLRGPRGGLILCNDEALAKKFNSAIFPGLQGGPLMHVIAAKAVAFKEALQPDFKVYAKNVVENAKALAETLRGHGFDIVSGGTDNHLMLVDLRPKALKGNVSEKALVRAGITCNKNGIPFDPEKPFVTSGIRLGTPAATTRGFGVAEFQQVGGMIAEVLNAIAQSSDGQAPLVEAAIRQRVKELTDRFPIYS</sequence>
<gene>
    <name evidence="1" type="primary">glyA</name>
    <name type="ordered locus">RPE_2808</name>
</gene>
<evidence type="ECO:0000255" key="1">
    <source>
        <dbReference type="HAMAP-Rule" id="MF_00051"/>
    </source>
</evidence>
<proteinExistence type="inferred from homology"/>
<keyword id="KW-0028">Amino-acid biosynthesis</keyword>
<keyword id="KW-0963">Cytoplasm</keyword>
<keyword id="KW-0554">One-carbon metabolism</keyword>
<keyword id="KW-0663">Pyridoxal phosphate</keyword>
<keyword id="KW-0808">Transferase</keyword>
<comment type="function">
    <text evidence="1">Catalyzes the reversible interconversion of serine and glycine with tetrahydrofolate (THF) serving as the one-carbon carrier. This reaction serves as the major source of one-carbon groups required for the biosynthesis of purines, thymidylate, methionine, and other important biomolecules. Also exhibits THF-independent aldolase activity toward beta-hydroxyamino acids, producing glycine and aldehydes, via a retro-aldol mechanism.</text>
</comment>
<comment type="catalytic activity">
    <reaction evidence="1">
        <text>(6R)-5,10-methylene-5,6,7,8-tetrahydrofolate + glycine + H2O = (6S)-5,6,7,8-tetrahydrofolate + L-serine</text>
        <dbReference type="Rhea" id="RHEA:15481"/>
        <dbReference type="ChEBI" id="CHEBI:15377"/>
        <dbReference type="ChEBI" id="CHEBI:15636"/>
        <dbReference type="ChEBI" id="CHEBI:33384"/>
        <dbReference type="ChEBI" id="CHEBI:57305"/>
        <dbReference type="ChEBI" id="CHEBI:57453"/>
        <dbReference type="EC" id="2.1.2.1"/>
    </reaction>
</comment>
<comment type="cofactor">
    <cofactor evidence="1">
        <name>pyridoxal 5'-phosphate</name>
        <dbReference type="ChEBI" id="CHEBI:597326"/>
    </cofactor>
</comment>
<comment type="pathway">
    <text evidence="1">One-carbon metabolism; tetrahydrofolate interconversion.</text>
</comment>
<comment type="pathway">
    <text evidence="1">Amino-acid biosynthesis; glycine biosynthesis; glycine from L-serine: step 1/1.</text>
</comment>
<comment type="subunit">
    <text evidence="1">Homodimer.</text>
</comment>
<comment type="subcellular location">
    <subcellularLocation>
        <location evidence="1">Cytoplasm</location>
    </subcellularLocation>
</comment>
<comment type="similarity">
    <text evidence="1">Belongs to the SHMT family.</text>
</comment>
<organism>
    <name type="scientific">Rhodopseudomonas palustris (strain BisA53)</name>
    <dbReference type="NCBI Taxonomy" id="316055"/>
    <lineage>
        <taxon>Bacteria</taxon>
        <taxon>Pseudomonadati</taxon>
        <taxon>Pseudomonadota</taxon>
        <taxon>Alphaproteobacteria</taxon>
        <taxon>Hyphomicrobiales</taxon>
        <taxon>Nitrobacteraceae</taxon>
        <taxon>Rhodopseudomonas</taxon>
    </lineage>
</organism>
<reference key="1">
    <citation type="submission" date="2006-09" db="EMBL/GenBank/DDBJ databases">
        <title>Complete sequence of Rhodopseudomonas palustris BisA53.</title>
        <authorList>
            <consortium name="US DOE Joint Genome Institute"/>
            <person name="Copeland A."/>
            <person name="Lucas S."/>
            <person name="Lapidus A."/>
            <person name="Barry K."/>
            <person name="Detter J.C."/>
            <person name="Glavina del Rio T."/>
            <person name="Hammon N."/>
            <person name="Israni S."/>
            <person name="Dalin E."/>
            <person name="Tice H."/>
            <person name="Pitluck S."/>
            <person name="Chain P."/>
            <person name="Malfatti S."/>
            <person name="Shin M."/>
            <person name="Vergez L."/>
            <person name="Schmutz J."/>
            <person name="Larimer F."/>
            <person name="Land M."/>
            <person name="Hauser L."/>
            <person name="Pelletier D.A."/>
            <person name="Kyrpides N."/>
            <person name="Kim E."/>
            <person name="Harwood C.S."/>
            <person name="Oda Y."/>
            <person name="Richardson P."/>
        </authorList>
    </citation>
    <scope>NUCLEOTIDE SEQUENCE [LARGE SCALE GENOMIC DNA]</scope>
    <source>
        <strain>BisA53</strain>
    </source>
</reference>
<protein>
    <recommendedName>
        <fullName evidence="1">Serine hydroxymethyltransferase</fullName>
        <shortName evidence="1">SHMT</shortName>
        <shortName evidence="1">Serine methylase</shortName>
        <ecNumber evidence="1">2.1.2.1</ecNumber>
    </recommendedName>
</protein>
<name>GLYA_RHOP5</name>